<comment type="subcellular location">
    <subcellularLocation>
        <location evidence="1">Membrane</location>
        <topology evidence="1">Single-pass membrane protein</topology>
    </subcellularLocation>
    <text evidence="1 7">Presence in the organic matrix of the skeleton may be due to shedding of a soluble peptide.</text>
</comment>
<comment type="tissue specificity">
    <text evidence="6">Component of the acid-insoluble organic matrix of the aragonitic skeleton (at protein level).</text>
</comment>
<keyword id="KW-0106">Calcium</keyword>
<keyword id="KW-0903">Direct protein sequencing</keyword>
<keyword id="KW-1015">Disulfide bond</keyword>
<keyword id="KW-0245">EGF-like domain</keyword>
<keyword id="KW-0472">Membrane</keyword>
<keyword id="KW-0677">Repeat</keyword>
<keyword id="KW-0732">Signal</keyword>
<keyword id="KW-0812">Transmembrane</keyword>
<keyword id="KW-1133">Transmembrane helix</keyword>
<evidence type="ECO:0000255" key="1"/>
<evidence type="ECO:0000255" key="2">
    <source>
        <dbReference type="PROSITE-ProRule" id="PRU00043"/>
    </source>
</evidence>
<evidence type="ECO:0000255" key="3">
    <source>
        <dbReference type="PROSITE-ProRule" id="PRU00076"/>
    </source>
</evidence>
<evidence type="ECO:0000255" key="4">
    <source>
        <dbReference type="PROSITE-ProRule" id="PRU00122"/>
    </source>
</evidence>
<evidence type="ECO:0000256" key="5">
    <source>
        <dbReference type="SAM" id="MobiDB-lite"/>
    </source>
</evidence>
<evidence type="ECO:0000269" key="6">
    <source>
    </source>
</evidence>
<evidence type="ECO:0000303" key="7">
    <source>
    </source>
</evidence>
<evidence type="ECO:0000305" key="8"/>
<reference evidence="8" key="1">
    <citation type="journal article" date="2012" name="Mol. Ecol.">
        <title>Whole transcriptome analysis of the coral Acropora millepora reveals complex responses to CO(2)-driven acidification during the initiation of calcification.</title>
        <authorList>
            <person name="Moya A."/>
            <person name="Huisman L."/>
            <person name="Ball E.E."/>
            <person name="Hayward D.C."/>
            <person name="Grasso L.C."/>
            <person name="Chua C.M."/>
            <person name="Woo H.N."/>
            <person name="Gattuso J.P."/>
            <person name="Foret S."/>
            <person name="Miller D.J."/>
        </authorList>
    </citation>
    <scope>NUCLEOTIDE SEQUENCE [MRNA]</scope>
</reference>
<reference evidence="8" key="2">
    <citation type="journal article" date="2013" name="Mol. Biol. Evol.">
        <title>The skeletal proteome of the coral Acropora millepora: the evolution of calcification by co-option and domain shuffling.</title>
        <authorList>
            <person name="Ramos-Silva P."/>
            <person name="Kaandorp J."/>
            <person name="Huisman L."/>
            <person name="Marie B."/>
            <person name="Zanella-Cleon I."/>
            <person name="Guichard N."/>
            <person name="Miller D.J."/>
            <person name="Marin F."/>
        </authorList>
    </citation>
    <scope>PROTEIN SEQUENCE OF 212-228; 528-540; 581-594; 612-623; 665-717; 999-1010; 1087-1128; 1291-1300; 1394-1404; 1508-1518; 1719-1734; 2291-2302; 2900-2914; 2943-2958; 3477-3487 AND 3912-3928</scope>
    <scope>TISSUE SPECIFICITY</scope>
    <scope>IDENTIFICATION BY MASS SPECTROMETRY</scope>
</reference>
<dbReference type="EMBL" id="JT011093">
    <property type="status" value="NOT_ANNOTATED_CDS"/>
    <property type="molecule type" value="mRNA"/>
</dbReference>
<dbReference type="SMR" id="B8V7Q1"/>
<dbReference type="OrthoDB" id="6252479at2759"/>
<dbReference type="GO" id="GO:0016342">
    <property type="term" value="C:catenin complex"/>
    <property type="evidence" value="ECO:0007669"/>
    <property type="project" value="TreeGrafter"/>
</dbReference>
<dbReference type="GO" id="GO:0008013">
    <property type="term" value="F:beta-catenin binding"/>
    <property type="evidence" value="ECO:0007669"/>
    <property type="project" value="TreeGrafter"/>
</dbReference>
<dbReference type="GO" id="GO:0045296">
    <property type="term" value="F:cadherin binding"/>
    <property type="evidence" value="ECO:0007669"/>
    <property type="project" value="TreeGrafter"/>
</dbReference>
<dbReference type="GO" id="GO:0005509">
    <property type="term" value="F:calcium ion binding"/>
    <property type="evidence" value="ECO:0007669"/>
    <property type="project" value="InterPro"/>
</dbReference>
<dbReference type="GO" id="GO:0016477">
    <property type="term" value="P:cell migration"/>
    <property type="evidence" value="ECO:0007669"/>
    <property type="project" value="TreeGrafter"/>
</dbReference>
<dbReference type="GO" id="GO:0007156">
    <property type="term" value="P:homophilic cell adhesion via plasma membrane adhesion molecules"/>
    <property type="evidence" value="ECO:0007669"/>
    <property type="project" value="InterPro"/>
</dbReference>
<dbReference type="CDD" id="cd11304">
    <property type="entry name" value="Cadherin_repeat"/>
    <property type="match status" value="28"/>
</dbReference>
<dbReference type="CDD" id="cd00053">
    <property type="entry name" value="EGF"/>
    <property type="match status" value="1"/>
</dbReference>
<dbReference type="CDD" id="cd00054">
    <property type="entry name" value="EGF_CA"/>
    <property type="match status" value="1"/>
</dbReference>
<dbReference type="CDD" id="cd00110">
    <property type="entry name" value="LamG"/>
    <property type="match status" value="2"/>
</dbReference>
<dbReference type="FunFam" id="2.60.40.60:FF:000013">
    <property type="entry name" value="Cadherin EGF LAG seven-pass G-type receptor"/>
    <property type="match status" value="1"/>
</dbReference>
<dbReference type="FunFam" id="2.60.40.60:FF:000104">
    <property type="entry name" value="cadherin-23 isoform X1"/>
    <property type="match status" value="2"/>
</dbReference>
<dbReference type="FunFam" id="2.60.40.60:FF:000020">
    <property type="entry name" value="Dachsous cadherin-related 1b"/>
    <property type="match status" value="5"/>
</dbReference>
<dbReference type="FunFam" id="2.60.40.60:FF:000033">
    <property type="entry name" value="FAT atypical cadherin 1"/>
    <property type="match status" value="2"/>
</dbReference>
<dbReference type="FunFam" id="2.60.40.60:FF:000058">
    <property type="entry name" value="FAT atypical cadherin 3"/>
    <property type="match status" value="1"/>
</dbReference>
<dbReference type="Gene3D" id="2.60.120.200">
    <property type="match status" value="2"/>
</dbReference>
<dbReference type="Gene3D" id="2.60.40.60">
    <property type="entry name" value="Cadherins"/>
    <property type="match status" value="30"/>
</dbReference>
<dbReference type="Gene3D" id="2.10.25.10">
    <property type="entry name" value="Laminin"/>
    <property type="match status" value="2"/>
</dbReference>
<dbReference type="Gene3D" id="4.10.900.10">
    <property type="entry name" value="TCF3-CBD (Catenin binding domain)"/>
    <property type="match status" value="1"/>
</dbReference>
<dbReference type="InterPro" id="IPR039808">
    <property type="entry name" value="Cadherin"/>
</dbReference>
<dbReference type="InterPro" id="IPR002126">
    <property type="entry name" value="Cadherin-like_dom"/>
</dbReference>
<dbReference type="InterPro" id="IPR015919">
    <property type="entry name" value="Cadherin-like_sf"/>
</dbReference>
<dbReference type="InterPro" id="IPR020894">
    <property type="entry name" value="Cadherin_CS"/>
</dbReference>
<dbReference type="InterPro" id="IPR000233">
    <property type="entry name" value="Cadherin_Y-type_LIR"/>
</dbReference>
<dbReference type="InterPro" id="IPR027397">
    <property type="entry name" value="Catenin-bd_sf"/>
</dbReference>
<dbReference type="InterPro" id="IPR013320">
    <property type="entry name" value="ConA-like_dom_sf"/>
</dbReference>
<dbReference type="InterPro" id="IPR000742">
    <property type="entry name" value="EGF-like_dom"/>
</dbReference>
<dbReference type="InterPro" id="IPR001791">
    <property type="entry name" value="Laminin_G"/>
</dbReference>
<dbReference type="PANTHER" id="PTHR24027:SF438">
    <property type="entry name" value="CADHERIN 23"/>
    <property type="match status" value="1"/>
</dbReference>
<dbReference type="PANTHER" id="PTHR24027">
    <property type="entry name" value="CADHERIN-23"/>
    <property type="match status" value="1"/>
</dbReference>
<dbReference type="Pfam" id="PF01049">
    <property type="entry name" value="CADH_Y-type_LIR"/>
    <property type="match status" value="1"/>
</dbReference>
<dbReference type="Pfam" id="PF00028">
    <property type="entry name" value="Cadherin"/>
    <property type="match status" value="23"/>
</dbReference>
<dbReference type="Pfam" id="PF02210">
    <property type="entry name" value="Laminin_G_2"/>
    <property type="match status" value="2"/>
</dbReference>
<dbReference type="PRINTS" id="PR00205">
    <property type="entry name" value="CADHERIN"/>
</dbReference>
<dbReference type="SMART" id="SM00112">
    <property type="entry name" value="CA"/>
    <property type="match status" value="31"/>
</dbReference>
<dbReference type="SMART" id="SM00181">
    <property type="entry name" value="EGF"/>
    <property type="match status" value="2"/>
</dbReference>
<dbReference type="SMART" id="SM00282">
    <property type="entry name" value="LamG"/>
    <property type="match status" value="2"/>
</dbReference>
<dbReference type="SUPFAM" id="SSF49313">
    <property type="entry name" value="Cadherin-like"/>
    <property type="match status" value="30"/>
</dbReference>
<dbReference type="SUPFAM" id="SSF49899">
    <property type="entry name" value="Concanavalin A-like lectins/glucanases"/>
    <property type="match status" value="2"/>
</dbReference>
<dbReference type="SUPFAM" id="SSF57196">
    <property type="entry name" value="EGF/Laminin"/>
    <property type="match status" value="1"/>
</dbReference>
<dbReference type="PROSITE" id="PS00232">
    <property type="entry name" value="CADHERIN_1"/>
    <property type="match status" value="9"/>
</dbReference>
<dbReference type="PROSITE" id="PS50268">
    <property type="entry name" value="CADHERIN_2"/>
    <property type="match status" value="31"/>
</dbReference>
<dbReference type="PROSITE" id="PS00022">
    <property type="entry name" value="EGF_1"/>
    <property type="match status" value="3"/>
</dbReference>
<dbReference type="PROSITE" id="PS01186">
    <property type="entry name" value="EGF_2"/>
    <property type="match status" value="2"/>
</dbReference>
<dbReference type="PROSITE" id="PS50026">
    <property type="entry name" value="EGF_3"/>
    <property type="match status" value="3"/>
</dbReference>
<dbReference type="PROSITE" id="PS50025">
    <property type="entry name" value="LAM_G_DOMAIN"/>
    <property type="match status" value="1"/>
</dbReference>
<feature type="signal peptide" evidence="1">
    <location>
        <begin position="1"/>
        <end position="22"/>
    </location>
</feature>
<feature type="chain" id="PRO_0000429552" description="Protocadherin-like protein" evidence="1">
    <location>
        <begin position="23"/>
        <end position="4467"/>
    </location>
</feature>
<feature type="topological domain" description="Extracellular" evidence="1">
    <location>
        <begin position="23"/>
        <end position="4258"/>
    </location>
</feature>
<feature type="transmembrane region" description="Helical" evidence="1">
    <location>
        <begin position="4259"/>
        <end position="4279"/>
    </location>
</feature>
<feature type="topological domain" description="Cytoplasmic" evidence="1">
    <location>
        <begin position="4280"/>
        <end position="4467"/>
    </location>
</feature>
<feature type="domain" description="Cadherin 1" evidence="2">
    <location>
        <begin position="23"/>
        <end position="128"/>
    </location>
</feature>
<feature type="domain" description="Cadherin 2" evidence="2">
    <location>
        <begin position="129"/>
        <end position="238"/>
    </location>
</feature>
<feature type="domain" description="Cadherin 3" evidence="2">
    <location>
        <begin position="239"/>
        <end position="350"/>
    </location>
</feature>
<feature type="domain" description="Cadherin 4" evidence="2">
    <location>
        <begin position="351"/>
        <end position="455"/>
    </location>
</feature>
<feature type="domain" description="Cadherin 5" evidence="2">
    <location>
        <begin position="459"/>
        <end position="566"/>
    </location>
</feature>
<feature type="domain" description="Cadherin 6" evidence="2">
    <location>
        <begin position="567"/>
        <end position="664"/>
    </location>
</feature>
<feature type="domain" description="Cadherin 7" evidence="2">
    <location>
        <begin position="665"/>
        <end position="764"/>
    </location>
</feature>
<feature type="domain" description="Cadherin 8" evidence="2">
    <location>
        <begin position="765"/>
        <end position="884"/>
    </location>
</feature>
<feature type="domain" description="Cadherin 9" evidence="2">
    <location>
        <begin position="885"/>
        <end position="994"/>
    </location>
</feature>
<feature type="domain" description="Cadherin 10" evidence="2">
    <location>
        <begin position="1092"/>
        <end position="1197"/>
    </location>
</feature>
<feature type="domain" description="Cadherin 11" evidence="2">
    <location>
        <begin position="1290"/>
        <end position="1395"/>
    </location>
</feature>
<feature type="domain" description="Cadherin 12" evidence="2">
    <location>
        <begin position="1396"/>
        <end position="1499"/>
    </location>
</feature>
<feature type="domain" description="Cadherin 13" evidence="2">
    <location>
        <begin position="1495"/>
        <end position="1597"/>
    </location>
</feature>
<feature type="domain" description="Cadherin 14" evidence="2">
    <location>
        <begin position="1601"/>
        <end position="1701"/>
    </location>
</feature>
<feature type="domain" description="Cadherin 15" evidence="2">
    <location>
        <begin position="1793"/>
        <end position="1891"/>
    </location>
</feature>
<feature type="domain" description="Cadherin 16" evidence="2">
    <location>
        <begin position="1892"/>
        <end position="1992"/>
    </location>
</feature>
<feature type="domain" description="Cadherin 17" evidence="2">
    <location>
        <begin position="1993"/>
        <end position="2100"/>
    </location>
</feature>
<feature type="domain" description="Cadherin 18" evidence="2">
    <location>
        <begin position="2101"/>
        <end position="2202"/>
    </location>
</feature>
<feature type="domain" description="Cadherin 19" evidence="2">
    <location>
        <begin position="2203"/>
        <end position="2312"/>
    </location>
</feature>
<feature type="domain" description="Cadherin 20" evidence="2">
    <location>
        <begin position="2313"/>
        <end position="2423"/>
    </location>
</feature>
<feature type="domain" description="Cadherin 21" evidence="2">
    <location>
        <begin position="2425"/>
        <end position="2529"/>
    </location>
</feature>
<feature type="domain" description="Cadherin 22" evidence="2">
    <location>
        <begin position="2530"/>
        <end position="2639"/>
    </location>
</feature>
<feature type="domain" description="Cadherin 23" evidence="2">
    <location>
        <begin position="2640"/>
        <end position="2746"/>
    </location>
</feature>
<feature type="domain" description="Cadherin 24" evidence="2">
    <location>
        <begin position="2747"/>
        <end position="2849"/>
    </location>
</feature>
<feature type="domain" description="Cadherin 25" evidence="2">
    <location>
        <begin position="2850"/>
        <end position="2954"/>
    </location>
</feature>
<feature type="domain" description="Cadherin 26" evidence="2">
    <location>
        <begin position="2955"/>
        <end position="3062"/>
    </location>
</feature>
<feature type="domain" description="Cadherin 27" evidence="2">
    <location>
        <begin position="3063"/>
        <end position="3170"/>
    </location>
</feature>
<feature type="domain" description="Cadherin 28" evidence="2">
    <location>
        <begin position="3173"/>
        <end position="3288"/>
    </location>
</feature>
<feature type="domain" description="EGF-like 1" evidence="3">
    <location>
        <begin position="3551"/>
        <end position="3589"/>
    </location>
</feature>
<feature type="domain" description="Laminin G-like 1" evidence="4">
    <location>
        <begin position="3590"/>
        <end position="3788"/>
    </location>
</feature>
<feature type="domain" description="EGF-like 2" evidence="3">
    <location>
        <begin position="3790"/>
        <end position="3824"/>
    </location>
</feature>
<feature type="domain" description="Laminin G-like 2" evidence="4">
    <location>
        <begin position="3842"/>
        <end position="4096"/>
    </location>
</feature>
<feature type="domain" description="EGF-like 3" evidence="3">
    <location>
        <begin position="4206"/>
        <end position="4238"/>
    </location>
</feature>
<feature type="region of interest" description="Disordered" evidence="5">
    <location>
        <begin position="4089"/>
        <end position="4118"/>
    </location>
</feature>
<feature type="region of interest" description="Disordered" evidence="5">
    <location>
        <begin position="4424"/>
        <end position="4445"/>
    </location>
</feature>
<feature type="compositionally biased region" description="Gly residues" evidence="5">
    <location>
        <begin position="4096"/>
        <end position="4118"/>
    </location>
</feature>
<feature type="disulfide bond" evidence="1">
    <location>
        <begin position="3555"/>
        <end position="3567"/>
    </location>
</feature>
<feature type="disulfide bond" evidence="1">
    <location>
        <begin position="3561"/>
        <end position="3577"/>
    </location>
</feature>
<feature type="disulfide bond" evidence="1">
    <location>
        <begin position="3579"/>
        <end position="3588"/>
    </location>
</feature>
<feature type="disulfide bond" evidence="1">
    <location>
        <begin position="3762"/>
        <end position="3788"/>
    </location>
</feature>
<feature type="disulfide bond" evidence="1">
    <location>
        <begin position="3794"/>
        <end position="3803"/>
    </location>
</feature>
<feature type="disulfide bond" evidence="1">
    <location>
        <begin position="3797"/>
        <end position="3812"/>
    </location>
</feature>
<feature type="disulfide bond" evidence="1">
    <location>
        <begin position="3814"/>
        <end position="3823"/>
    </location>
</feature>
<feature type="disulfide bond" evidence="1">
    <location>
        <begin position="4207"/>
        <end position="4218"/>
    </location>
</feature>
<feature type="disulfide bond" evidence="1">
    <location>
        <begin position="4212"/>
        <end position="4226"/>
    </location>
</feature>
<feature type="disulfide bond" evidence="1">
    <location>
        <begin position="4228"/>
        <end position="4237"/>
    </location>
</feature>
<protein>
    <recommendedName>
        <fullName evidence="7">Protocadherin-like protein</fullName>
    </recommendedName>
</protein>
<organism>
    <name type="scientific">Acropora millepora</name>
    <name type="common">Staghorn coral</name>
    <name type="synonym">Heteropora millepora</name>
    <dbReference type="NCBI Taxonomy" id="45264"/>
    <lineage>
        <taxon>Eukaryota</taxon>
        <taxon>Metazoa</taxon>
        <taxon>Cnidaria</taxon>
        <taxon>Anthozoa</taxon>
        <taxon>Hexacorallia</taxon>
        <taxon>Scleractinia</taxon>
        <taxon>Astrocoeniina</taxon>
        <taxon>Acroporidae</taxon>
        <taxon>Acropora</taxon>
    </lineage>
</organism>
<name>PCDL_ACRMI</name>
<sequence>MRGINAIVGFLLCFCLLHRINTAVQFKQEILEEGKSAGYVVLSLPLPPSNEIYTFFQAQDSGSRDALLLFQISESGVIKTTKPITYEIGQKNYYDLVAIRRQRGEKVGGIPTSIRIVIKDTNNFSPTFPQHLYYGRVKERSPDNTVVMGLENCFAEDRDTGGIQSYSISSGNDKGYFKTSMTTVNDRKFLVLKTTNVPILIDTTPEINLTVRAYDGANSATTGITVKIIDENDNSPVFEKKSYATTVNEDTPLLTSVLRVRATDKDLGTNGGVYYYLNGAQYFSVDAITGVIKVVRQLPDQPRIVLDVKATDRGTPSKTASVQVTIDINGIPDYPPPDSSNPGVNTVPVFQEESYTASVREDFPINAALLVIHAIDRDPPGRNRQIRYSLSSSGTFEIDQFSGVVKLVGRLNYDSKKQYNLFVRATDQALTPLVASASLKVTVQEVDKNRNTPVFSPANPQQRMVSIKENMPASTQVGSLITATDADGNQGPDGQIAYSIFSGSGLPYFQINKDTGRLETVIRLDRERQSQYDLIVEARDKALYPLFSHVYLMINIDPEEDNNPDFSKVVYTANVPEKAPRDTFVTVIHATDRDGASVSYSIQNAGSAFAIRAETGVIVTARVLDASIGDTDFTLFVTASAGTKKSESQINVTIVSKQDSPPTFKNAPYSVTVPENLGKIDNLLCIAAYGVRGTAVSYSIASAAVGKFAVDIDSGRFSATSSFDYEQVLGGEYPVQVQASTSPQQVATAGITVRVTDDKDPPTFSRSSYTFDIDENTPGGTTILPKNADGSSGGLLISDEDTAITQFDCTIENVPGNVFDHFRVVNPDNSVRECKLVTVRGFNFVENPSFQFEVRATDRNYRNMFASAQVKVVIKDTNNHSPEFSQTSYWASVGRDYPTGNSILKVTATDQDSGSFGEITYELLNTQDRSRFSLDSNTGVLSFPNSLPARRYQLRVQASDRAQKSNEIRRTEVDVFVTVYLPGTGIIVFDPPLFPKAIREDITINTQVKLVSTRGASNIKYSIVGGNTNNAFRIGSNNGQILVQKALDRETQSKYTLVIRAEESTSNVATEANFIISVTDVNDNPPRITFMEAQPKNIAIEDFSPPGSPVIRVIATDPDTGAAAAIKYSITIGTPFSINEDNGLITAAREIRKTERSTWDLTVTARDSGTPSRNSAPYRLRIHVTDGLQAPQLQPRFSVNVNENEQVGNVVKDISPVQKNPNFKYSILSGNRDDAFCINHAGMISVAKPLDREKVNSYILRVSASVGNKISNSTVSVTIADQNDDAPQFSRTVYTFEVREDLPQGREVGRVFAIDRDDGTNGQVSYSLLYTVDVNSKFTVDGATGAVVTGSVLDFEEIRQHILYVKAEDKGRPLRTSIAKVIVNVKDVNDRSPKFSADSYVTKVSLDEVIGTQVLLVSATDLDSGDNSVVVYNITAGNEEGAFEIDPDTGAIKVKKSLTTVSASKFSLRVEAKDKGNPPRMTPTTVQLNIFLPDGPPKFVVKPVVEERFEGIAANGRVMVVKAATSEALTYEIISGNEDGLFRIEPTTGEIKVTRVLDYEEASEHRLVVRVMDTRDRSDRVTVILKVKNINDNEPQFPGESNGFVERKVEDDFQIGDAAARLSAYDKDAGDSISYQLSANALPLFSIDNEGFLIAKKPRSEIQSPVKFELVAKDNGVPQRQTTVQVRLVFVSYRGDQQPVRVYVREDKEVGSVIARVPRFFPGGTLSIIFPQKANFTVDNSGRIRMTTAFDFEQSQFYRLTVREQEPAPGRRTNDIDVEINVVDVNDNKPKFTMIDFFGRVNTNSRPGTSAYQLKAEDKDGGLSGTVGYQMLSRDVPFGINPISGVVETDATLQDRGGYNITVFPFDFGVPREFGAAVSLDIKTVNFKPQFSESAYRFQVFENAPPGVIVGEVNATSLSGARLGFSVPLGDPSKKFEVHNSGEIRLNSRLDHEKQSIYNLKVRATELIPGGYSNEVEVQVTVTNANEYYPKFEPNLYFKVVNENVAAGQSVLRVTAIDKDCGTTSKCEAGLLKFSVEGTSLFKIDPRTGDVSVGSTPLDYEKQREHVFTVVVEDFGEKIYKSRGFVTIDVRNTDDEKPQFLESDYTISIAEDAETGRPLAAILARDADGDPVKYSITSGDSGGIFQINPTTGVLSLKSSIKGNPRTQYTLQVKASNSAQDSRFDEVRVVVNIEDSNDNRPVFTDCPPEVPVEENKPRGHRVYQVVAQDTKDRGRNKEIEYFLVTGGERLFEIDNTTGVIKTLTSLDRETKDQHTLIIMAEDGGHGRNSAERLLSYCILDVKVVDQNDNFPFFLTRTYYASVWQGAPVNTEVLTVRAADMDTRVNANIDNSEVQYQLVNADDKFQVELATGVIKTKATLVSFVGKVQLQIRAINKQPMAISEERPRTSTTTVEINVEKDKPPAFAPSAVYKSAINEDVKIGKEVQQILAISQVDRKNKIVYSFVKSNPEGEQKFQIDPATGNITTASTLDYEQVKEYRLQFRATDIATNLYATCVVIISLIDVNDDTPTFKLEEYTARVPENAAVDFNVITIEADDRDTALSGQVGYTLEVSDSSEGQFFAINGQTGVMITKKSFDREDPKHIPKYNVFAVATDKGVPPLAAKVTISVAIVDQNDQPPIFPKPSYEVSVQEDAGIGTSVGEFTATDADIGDNARLDYFISSGDASHIFKMESVYGDNNFGILILAGKLDFETKKTYNISITATDRKDSATVPVVVNVLDTNDNIPKFDNLIYEAIIPENSPPGQRVETVSATDLDSPKIQNDLRYSLDADGQKNFAVDAVSGLITTANQRLDREVNPVVTFTAFAFDGKHRGEALIRVTLRDVNDNSPYFPNPPYVGYVEENLDPGASVMVIQAFDLDSGIDGEIVYSLDDSSNNKFKIDRISGLVTTVETMEKETAVNSFTIVVKATDKGSPALSGTVTATIRVSDGNDQAPVFNPREYRQKVPEDSPPGFLVTQVKATDQDEGYNAELEFTITAGNDPYQFYIDPKTGEILVSGMLDFDHGKKSYNLTVMVSDRGVPPKQAAKPAFVYITIVDSNDNPPVFVPAEYSIKVTEGTKPGDTVQLVTAVDQDTGTNALFTFGIADGDDADMFGIRPDPKNSSIGFIYTVLQLDRETVPQYNLTVTATDTGGLQGVAVVRITVLDTNDNGPWFQPRYYEGSITVTSDSNSQQEITTVKVFDPDEPSNGPPFSFSIESTKPATDATRFGLRKDPKEPQTANEVYSIGAFTRQVPEWELTIKAIDSGKPVAMFNSTLVFVWVVDDKNLNEPFDGALTIIVNAYDDKFAGGIIGKAYYQDVDYMGDENTYSMSEQEYFTLGELTGDISAAANIPVGLYKFEIEVLEQRLRPNTNTFKTVTSSVSVIVQSVPRAAILQSVAVQILAYRRPALFVADIYTNFRQKLAGIFGVQEADILIFSVQRAPSKRVPLADVFGVEIQLAVRSSGSSFMDKMDVVRGIVEGKAELEALSLKIGDIGIDVCAAERQDVGVCNNKVEASSAFTVVSGDIGQIEPSKSSLTVVSIDITLKAVYTSILPPDINCTTGTPCLHGGTCHNAVPKGIICECGRDYLGPECQSTTRTFRGNSYLWLDKLASYERSSISLQFMTGSANGLLLYQGPLYNGANNGLPDSIALYLVDGFAKLVIALGPHPMTPLELYMNKGDRLDDRTWHTVQVIRERKKVVLRIDKCSYSKIVEDYGQIVEDRSSCEIKGEIWGSAIYLNGFGPLQIGGVENSISDMKINFTGFSGCIRNIYNNGRMYDLFNPLKEVNTELGCRLNNQCPNCNGRGYCEPFWNYAICVCDLGFGGANCDSRTQANWYRANSFTQYRVKQVKRKRRELVPAPVSMANEFYTNIALQVRVSPNSSNVVIFLASNSLGTEFNRIDVKNHVLRYAFRLGDRMKILKIPQLNVTDDKYHTVIVKREGNRASLQIDYRGKVEGTTGGLHKLLNMGGGSFFTGGLPNITEVRVVEAFVNSGGNAVLRTAEGNIISSGMGSAYTGIGSYMSNVITVNNFGGVDVSYGVSGAPHVQRTIKTKSSIFTGSSGVITRISVSRGHSVEFMNSRFFTRKTKQKQKVIISSSGGSVSGGSGGASGGSGGASGSGGSVGVSGGGGASVGGSILGSSASMDTKGNLRSYGSGFGTWTIAGAGPNEAGDVQVIGDFGGCTASNSYNGLDLDSHPTIEARRQNVEFPCPCGSNFCRHGGTCVSADPPYCLCPVGWSGPVCESIVKDPRPGQRPSSRWANPAVIACILVILLAILVIIGAVLLKRRPQPAVVAVVEDGHVHDNVRPYHDEGAGEEDNFGYDISTLMKYTYVENGVAGTGGVGHGKFKNGGSSGEEEFTATETKPLLQGAMPDDDLHFKTTTITKRKVVHPDSIDVKQFIDTRASEADGEYILSIDELHIYRYEGDDSDVDDLSELGDSDEEPDEEEEQEFAFLQDWGKKFDNLNRIFNEDE</sequence>
<accession>B8V7Q1</accession>
<proteinExistence type="evidence at protein level"/>